<keyword id="KW-0175">Coiled coil</keyword>
<keyword id="KW-1185">Reference proteome</keyword>
<keyword id="KW-0964">Secreted</keyword>
<keyword id="KW-0732">Signal</keyword>
<gene>
    <name type="ORF">GA11364</name>
</gene>
<name>NEUFC_DROPS</name>
<protein>
    <recommendedName>
        <fullName>Neuferricin homolog</fullName>
    </recommendedName>
    <alternativeName>
        <fullName>Cytochrome b5 domain-containing protein 2 homolog</fullName>
    </alternativeName>
</protein>
<feature type="signal peptide" evidence="2">
    <location>
        <begin position="1"/>
        <end position="23"/>
    </location>
</feature>
<feature type="chain" id="PRO_0000312329" description="Neuferricin homolog">
    <location>
        <begin position="24"/>
        <end position="286"/>
    </location>
</feature>
<feature type="domain" description="Cytochrome b5 heme-binding">
    <location>
        <begin position="61"/>
        <end position="145"/>
    </location>
</feature>
<feature type="coiled-coil region" evidence="2">
    <location>
        <begin position="176"/>
        <end position="200"/>
    </location>
</feature>
<comment type="function">
    <text evidence="1">Heme-binding protein.</text>
</comment>
<comment type="subcellular location">
    <subcellularLocation>
        <location evidence="1">Secreted</location>
    </subcellularLocation>
</comment>
<comment type="domain">
    <text evidence="1">The cytochrome b5 heme-binding domain was proven to bind heme, although it lacks the conserved iron-binding His residues at position 98 and 125.</text>
</comment>
<comment type="similarity">
    <text evidence="3">Belongs to the cytochrome b5 family. MAPR subfamily.</text>
</comment>
<sequence length="286" mass="32439">MFGFVKYLFKLQFLFILAAVLAGLYRTEIKQFANRHAANYVDKADVETVSLQFKAANENTATVLTSAELSKYNGEDGQPIYLALLGSVFDVTRGIKHYGTGCSYNFFVGRDASVAFISGEFEEYDPQTADDVLTLKPNDLLGLANWRDFYEKEYIYKGKLIGRFYDEQGEPTTYYHKYLALLEQAQIAKAEVDELRSKYPGCNIEWSEAKGTRVWCTNTSGDGKERAWTGFPRKLYSRGNKNFNCACVPESELDQIDAEGQAAHGDVMFKTYDNCSSRAKECFYRV</sequence>
<dbReference type="EMBL" id="CH379064">
    <property type="protein sequence ID" value="EAL31807.1"/>
    <property type="molecule type" value="Genomic_DNA"/>
</dbReference>
<dbReference type="RefSeq" id="XP_001354752.1">
    <property type="nucleotide sequence ID" value="XM_001354716.3"/>
</dbReference>
<dbReference type="SMR" id="Q29HF1"/>
<dbReference type="FunCoup" id="Q29HF1">
    <property type="interactions" value="740"/>
</dbReference>
<dbReference type="STRING" id="46245.Q29HF1"/>
<dbReference type="EnsemblMetazoa" id="FBtr0284386">
    <property type="protein sequence ID" value="FBpp0282824"/>
    <property type="gene ID" value="FBgn0071418"/>
</dbReference>
<dbReference type="KEGG" id="dpo:4814739"/>
<dbReference type="eggNOG" id="KOG1108">
    <property type="taxonomic scope" value="Eukaryota"/>
</dbReference>
<dbReference type="HOGENOM" id="CLU_065455_0_1_1"/>
<dbReference type="InParanoid" id="Q29HF1"/>
<dbReference type="OMA" id="PPCNIEW"/>
<dbReference type="PhylomeDB" id="Q29HF1"/>
<dbReference type="Proteomes" id="UP000001819">
    <property type="component" value="Chromosome X"/>
</dbReference>
<dbReference type="Bgee" id="FBgn0071418">
    <property type="expression patterns" value="Expressed in insect adult head and 2 other cell types or tissues"/>
</dbReference>
<dbReference type="GO" id="GO:0012505">
    <property type="term" value="C:endomembrane system"/>
    <property type="evidence" value="ECO:0007669"/>
    <property type="project" value="TreeGrafter"/>
</dbReference>
<dbReference type="GO" id="GO:0005576">
    <property type="term" value="C:extracellular region"/>
    <property type="evidence" value="ECO:0007669"/>
    <property type="project" value="UniProtKB-SubCell"/>
</dbReference>
<dbReference type="GO" id="GO:0016020">
    <property type="term" value="C:membrane"/>
    <property type="evidence" value="ECO:0007669"/>
    <property type="project" value="TreeGrafter"/>
</dbReference>
<dbReference type="Gene3D" id="3.10.120.10">
    <property type="entry name" value="Cytochrome b5-like heme/steroid binding domain"/>
    <property type="match status" value="1"/>
</dbReference>
<dbReference type="InterPro" id="IPR001199">
    <property type="entry name" value="Cyt_B5-like_heme/steroid-bd"/>
</dbReference>
<dbReference type="InterPro" id="IPR036400">
    <property type="entry name" value="Cyt_B5-like_heme/steroid_sf"/>
</dbReference>
<dbReference type="InterPro" id="IPR050577">
    <property type="entry name" value="MAPR/NEUFC/NENF-like"/>
</dbReference>
<dbReference type="PANTHER" id="PTHR10281">
    <property type="entry name" value="MEMBRANE-ASSOCIATED PROGESTERONE RECEPTOR COMPONENT-RELATED"/>
    <property type="match status" value="1"/>
</dbReference>
<dbReference type="PANTHER" id="PTHR10281:SF4">
    <property type="entry name" value="NEUFERRICIN"/>
    <property type="match status" value="1"/>
</dbReference>
<dbReference type="Pfam" id="PF00173">
    <property type="entry name" value="Cyt-b5"/>
    <property type="match status" value="1"/>
</dbReference>
<dbReference type="SMART" id="SM01117">
    <property type="entry name" value="Cyt-b5"/>
    <property type="match status" value="1"/>
</dbReference>
<dbReference type="SUPFAM" id="SSF55856">
    <property type="entry name" value="Cytochrome b5-like heme/steroid binding domain"/>
    <property type="match status" value="1"/>
</dbReference>
<reference key="1">
    <citation type="journal article" date="2005" name="Genome Res.">
        <title>Comparative genome sequencing of Drosophila pseudoobscura: chromosomal, gene, and cis-element evolution.</title>
        <authorList>
            <person name="Richards S."/>
            <person name="Liu Y."/>
            <person name="Bettencourt B.R."/>
            <person name="Hradecky P."/>
            <person name="Letovsky S."/>
            <person name="Nielsen R."/>
            <person name="Thornton K."/>
            <person name="Hubisz M.J."/>
            <person name="Chen R."/>
            <person name="Meisel R.P."/>
            <person name="Couronne O."/>
            <person name="Hua S."/>
            <person name="Smith M.A."/>
            <person name="Zhang P."/>
            <person name="Liu J."/>
            <person name="Bussemaker H.J."/>
            <person name="van Batenburg M.F."/>
            <person name="Howells S.L."/>
            <person name="Scherer S.E."/>
            <person name="Sodergren E."/>
            <person name="Matthews B.B."/>
            <person name="Crosby M.A."/>
            <person name="Schroeder A.J."/>
            <person name="Ortiz-Barrientos D."/>
            <person name="Rives C.M."/>
            <person name="Metzker M.L."/>
            <person name="Muzny D.M."/>
            <person name="Scott G."/>
            <person name="Steffen D."/>
            <person name="Wheeler D.A."/>
            <person name="Worley K.C."/>
            <person name="Havlak P."/>
            <person name="Durbin K.J."/>
            <person name="Egan A."/>
            <person name="Gill R."/>
            <person name="Hume J."/>
            <person name="Morgan M.B."/>
            <person name="Miner G."/>
            <person name="Hamilton C."/>
            <person name="Huang Y."/>
            <person name="Waldron L."/>
            <person name="Verduzco D."/>
            <person name="Clerc-Blankenburg K.P."/>
            <person name="Dubchak I."/>
            <person name="Noor M.A.F."/>
            <person name="Anderson W."/>
            <person name="White K.P."/>
            <person name="Clark A.G."/>
            <person name="Schaeffer S.W."/>
            <person name="Gelbart W.M."/>
            <person name="Weinstock G.M."/>
            <person name="Gibbs R.A."/>
        </authorList>
    </citation>
    <scope>NUCLEOTIDE SEQUENCE [LARGE SCALE GENOMIC DNA]</scope>
    <source>
        <strain>MV2-25 / Tucson 14011-0121.94</strain>
    </source>
</reference>
<evidence type="ECO:0000250" key="1"/>
<evidence type="ECO:0000255" key="2"/>
<evidence type="ECO:0000305" key="3"/>
<accession>Q29HF1</accession>
<proteinExistence type="inferred from homology"/>
<organism>
    <name type="scientific">Drosophila pseudoobscura pseudoobscura</name>
    <name type="common">Fruit fly</name>
    <dbReference type="NCBI Taxonomy" id="46245"/>
    <lineage>
        <taxon>Eukaryota</taxon>
        <taxon>Metazoa</taxon>
        <taxon>Ecdysozoa</taxon>
        <taxon>Arthropoda</taxon>
        <taxon>Hexapoda</taxon>
        <taxon>Insecta</taxon>
        <taxon>Pterygota</taxon>
        <taxon>Neoptera</taxon>
        <taxon>Endopterygota</taxon>
        <taxon>Diptera</taxon>
        <taxon>Brachycera</taxon>
        <taxon>Muscomorpha</taxon>
        <taxon>Ephydroidea</taxon>
        <taxon>Drosophilidae</taxon>
        <taxon>Drosophila</taxon>
        <taxon>Sophophora</taxon>
    </lineage>
</organism>